<organism>
    <name type="scientific">Bacillus cereus (strain ZK / E33L)</name>
    <dbReference type="NCBI Taxonomy" id="288681"/>
    <lineage>
        <taxon>Bacteria</taxon>
        <taxon>Bacillati</taxon>
        <taxon>Bacillota</taxon>
        <taxon>Bacilli</taxon>
        <taxon>Bacillales</taxon>
        <taxon>Bacillaceae</taxon>
        <taxon>Bacillus</taxon>
        <taxon>Bacillus cereus group</taxon>
    </lineage>
</organism>
<protein>
    <recommendedName>
        <fullName evidence="1">Protein translocase subunit SecA 1</fullName>
        <ecNumber evidence="1">7.4.2.8</ecNumber>
    </recommendedName>
</protein>
<dbReference type="EC" id="7.4.2.8" evidence="1"/>
<dbReference type="EMBL" id="CP000001">
    <property type="protein sequence ID" value="AAU15396.1"/>
    <property type="molecule type" value="Genomic_DNA"/>
</dbReference>
<dbReference type="SMR" id="Q631G4"/>
<dbReference type="KEGG" id="bcz:BCE33L4883"/>
<dbReference type="PATRIC" id="fig|288681.22.peg.471"/>
<dbReference type="Proteomes" id="UP000002612">
    <property type="component" value="Chromosome"/>
</dbReference>
<dbReference type="GO" id="GO:0031522">
    <property type="term" value="C:cell envelope Sec protein transport complex"/>
    <property type="evidence" value="ECO:0007669"/>
    <property type="project" value="TreeGrafter"/>
</dbReference>
<dbReference type="GO" id="GO:0005829">
    <property type="term" value="C:cytosol"/>
    <property type="evidence" value="ECO:0007669"/>
    <property type="project" value="TreeGrafter"/>
</dbReference>
<dbReference type="GO" id="GO:0005886">
    <property type="term" value="C:plasma membrane"/>
    <property type="evidence" value="ECO:0007669"/>
    <property type="project" value="UniProtKB-SubCell"/>
</dbReference>
<dbReference type="GO" id="GO:0005524">
    <property type="term" value="F:ATP binding"/>
    <property type="evidence" value="ECO:0007669"/>
    <property type="project" value="UniProtKB-UniRule"/>
</dbReference>
<dbReference type="GO" id="GO:0046872">
    <property type="term" value="F:metal ion binding"/>
    <property type="evidence" value="ECO:0007669"/>
    <property type="project" value="UniProtKB-KW"/>
</dbReference>
<dbReference type="GO" id="GO:0008564">
    <property type="term" value="F:protein-exporting ATPase activity"/>
    <property type="evidence" value="ECO:0007669"/>
    <property type="project" value="UniProtKB-EC"/>
</dbReference>
<dbReference type="GO" id="GO:0065002">
    <property type="term" value="P:intracellular protein transmembrane transport"/>
    <property type="evidence" value="ECO:0007669"/>
    <property type="project" value="UniProtKB-UniRule"/>
</dbReference>
<dbReference type="GO" id="GO:0017038">
    <property type="term" value="P:protein import"/>
    <property type="evidence" value="ECO:0007669"/>
    <property type="project" value="InterPro"/>
</dbReference>
<dbReference type="GO" id="GO:0006605">
    <property type="term" value="P:protein targeting"/>
    <property type="evidence" value="ECO:0007669"/>
    <property type="project" value="UniProtKB-UniRule"/>
</dbReference>
<dbReference type="GO" id="GO:0043952">
    <property type="term" value="P:protein transport by the Sec complex"/>
    <property type="evidence" value="ECO:0007669"/>
    <property type="project" value="TreeGrafter"/>
</dbReference>
<dbReference type="CDD" id="cd17928">
    <property type="entry name" value="DEXDc_SecA"/>
    <property type="match status" value="1"/>
</dbReference>
<dbReference type="CDD" id="cd18803">
    <property type="entry name" value="SF2_C_secA"/>
    <property type="match status" value="1"/>
</dbReference>
<dbReference type="FunFam" id="1.10.3060.10:FF:000002">
    <property type="entry name" value="Preprotein translocase subunit SecA"/>
    <property type="match status" value="1"/>
</dbReference>
<dbReference type="FunFam" id="3.40.50.300:FF:000081">
    <property type="entry name" value="Preprotein translocase subunit SecA"/>
    <property type="match status" value="1"/>
</dbReference>
<dbReference type="FunFam" id="3.40.50.300:FF:000429">
    <property type="entry name" value="Preprotein translocase subunit SecA"/>
    <property type="match status" value="1"/>
</dbReference>
<dbReference type="FunFam" id="3.90.1440.10:FF:000001">
    <property type="entry name" value="Preprotein translocase subunit SecA"/>
    <property type="match status" value="1"/>
</dbReference>
<dbReference type="Gene3D" id="1.10.3060.10">
    <property type="entry name" value="Helical scaffold and wing domains of SecA"/>
    <property type="match status" value="1"/>
</dbReference>
<dbReference type="Gene3D" id="3.40.50.300">
    <property type="entry name" value="P-loop containing nucleotide triphosphate hydrolases"/>
    <property type="match status" value="3"/>
</dbReference>
<dbReference type="Gene3D" id="3.90.1440.10">
    <property type="entry name" value="SecA, preprotein cross-linking domain"/>
    <property type="match status" value="1"/>
</dbReference>
<dbReference type="HAMAP" id="MF_01382">
    <property type="entry name" value="SecA"/>
    <property type="match status" value="1"/>
</dbReference>
<dbReference type="InterPro" id="IPR014001">
    <property type="entry name" value="Helicase_ATP-bd"/>
</dbReference>
<dbReference type="InterPro" id="IPR001650">
    <property type="entry name" value="Helicase_C-like"/>
</dbReference>
<dbReference type="InterPro" id="IPR027417">
    <property type="entry name" value="P-loop_NTPase"/>
</dbReference>
<dbReference type="InterPro" id="IPR004027">
    <property type="entry name" value="SEC_C_motif"/>
</dbReference>
<dbReference type="InterPro" id="IPR000185">
    <property type="entry name" value="SecA"/>
</dbReference>
<dbReference type="InterPro" id="IPR020937">
    <property type="entry name" value="SecA_CS"/>
</dbReference>
<dbReference type="InterPro" id="IPR011115">
    <property type="entry name" value="SecA_DEAD"/>
</dbReference>
<dbReference type="InterPro" id="IPR014018">
    <property type="entry name" value="SecA_motor_DEAD"/>
</dbReference>
<dbReference type="InterPro" id="IPR011130">
    <property type="entry name" value="SecA_preprotein_X-link_dom"/>
</dbReference>
<dbReference type="InterPro" id="IPR044722">
    <property type="entry name" value="SecA_SF2_C"/>
</dbReference>
<dbReference type="InterPro" id="IPR011116">
    <property type="entry name" value="SecA_Wing/Scaffold"/>
</dbReference>
<dbReference type="InterPro" id="IPR036266">
    <property type="entry name" value="SecA_Wing/Scaffold_sf"/>
</dbReference>
<dbReference type="InterPro" id="IPR036670">
    <property type="entry name" value="SecA_X-link_sf"/>
</dbReference>
<dbReference type="NCBIfam" id="NF006630">
    <property type="entry name" value="PRK09200.1"/>
    <property type="match status" value="1"/>
</dbReference>
<dbReference type="NCBIfam" id="NF009538">
    <property type="entry name" value="PRK12904.1"/>
    <property type="match status" value="1"/>
</dbReference>
<dbReference type="NCBIfam" id="TIGR00963">
    <property type="entry name" value="secA"/>
    <property type="match status" value="1"/>
</dbReference>
<dbReference type="PANTHER" id="PTHR30612:SF0">
    <property type="entry name" value="CHLOROPLAST PROTEIN-TRANSPORTING ATPASE"/>
    <property type="match status" value="1"/>
</dbReference>
<dbReference type="PANTHER" id="PTHR30612">
    <property type="entry name" value="SECA INNER MEMBRANE COMPONENT OF SEC PROTEIN SECRETION SYSTEM"/>
    <property type="match status" value="1"/>
</dbReference>
<dbReference type="Pfam" id="PF21090">
    <property type="entry name" value="P-loop_SecA"/>
    <property type="match status" value="2"/>
</dbReference>
<dbReference type="Pfam" id="PF02810">
    <property type="entry name" value="SEC-C"/>
    <property type="match status" value="1"/>
</dbReference>
<dbReference type="Pfam" id="PF07517">
    <property type="entry name" value="SecA_DEAD"/>
    <property type="match status" value="1"/>
</dbReference>
<dbReference type="Pfam" id="PF01043">
    <property type="entry name" value="SecA_PP_bind"/>
    <property type="match status" value="1"/>
</dbReference>
<dbReference type="Pfam" id="PF07516">
    <property type="entry name" value="SecA_SW"/>
    <property type="match status" value="1"/>
</dbReference>
<dbReference type="PRINTS" id="PR00906">
    <property type="entry name" value="SECA"/>
</dbReference>
<dbReference type="SMART" id="SM00957">
    <property type="entry name" value="SecA_DEAD"/>
    <property type="match status" value="1"/>
</dbReference>
<dbReference type="SMART" id="SM00958">
    <property type="entry name" value="SecA_PP_bind"/>
    <property type="match status" value="1"/>
</dbReference>
<dbReference type="SUPFAM" id="SSF81886">
    <property type="entry name" value="Helical scaffold and wing domains of SecA"/>
    <property type="match status" value="1"/>
</dbReference>
<dbReference type="SUPFAM" id="SSF52540">
    <property type="entry name" value="P-loop containing nucleoside triphosphate hydrolases"/>
    <property type="match status" value="2"/>
</dbReference>
<dbReference type="SUPFAM" id="SSF81767">
    <property type="entry name" value="Pre-protein crosslinking domain of SecA"/>
    <property type="match status" value="1"/>
</dbReference>
<dbReference type="PROSITE" id="PS01312">
    <property type="entry name" value="SECA"/>
    <property type="match status" value="1"/>
</dbReference>
<dbReference type="PROSITE" id="PS51196">
    <property type="entry name" value="SECA_MOTOR_DEAD"/>
    <property type="match status" value="1"/>
</dbReference>
<evidence type="ECO:0000255" key="1">
    <source>
        <dbReference type="HAMAP-Rule" id="MF_01382"/>
    </source>
</evidence>
<evidence type="ECO:0000256" key="2">
    <source>
        <dbReference type="SAM" id="MobiDB-lite"/>
    </source>
</evidence>
<reference key="1">
    <citation type="journal article" date="2006" name="J. Bacteriol.">
        <title>Pathogenomic sequence analysis of Bacillus cereus and Bacillus thuringiensis isolates closely related to Bacillus anthracis.</title>
        <authorList>
            <person name="Han C.S."/>
            <person name="Xie G."/>
            <person name="Challacombe J.F."/>
            <person name="Altherr M.R."/>
            <person name="Bhotika S.S."/>
            <person name="Bruce D."/>
            <person name="Campbell C.S."/>
            <person name="Campbell M.L."/>
            <person name="Chen J."/>
            <person name="Chertkov O."/>
            <person name="Cleland C."/>
            <person name="Dimitrijevic M."/>
            <person name="Doggett N.A."/>
            <person name="Fawcett J.J."/>
            <person name="Glavina T."/>
            <person name="Goodwin L.A."/>
            <person name="Hill K.K."/>
            <person name="Hitchcock P."/>
            <person name="Jackson P.J."/>
            <person name="Keim P."/>
            <person name="Kewalramani A.R."/>
            <person name="Longmire J."/>
            <person name="Lucas S."/>
            <person name="Malfatti S."/>
            <person name="McMurry K."/>
            <person name="Meincke L.J."/>
            <person name="Misra M."/>
            <person name="Moseman B.L."/>
            <person name="Mundt M."/>
            <person name="Munk A.C."/>
            <person name="Okinaka R.T."/>
            <person name="Parson-Quintana B."/>
            <person name="Reilly L.P."/>
            <person name="Richardson P."/>
            <person name="Robinson D.L."/>
            <person name="Rubin E."/>
            <person name="Saunders E."/>
            <person name="Tapia R."/>
            <person name="Tesmer J.G."/>
            <person name="Thayer N."/>
            <person name="Thompson L.S."/>
            <person name="Tice H."/>
            <person name="Ticknor L.O."/>
            <person name="Wills P.L."/>
            <person name="Brettin T.S."/>
            <person name="Gilna P."/>
        </authorList>
    </citation>
    <scope>NUCLEOTIDE SEQUENCE [LARGE SCALE GENOMIC DNA]</scope>
    <source>
        <strain>ZK / E33L</strain>
    </source>
</reference>
<keyword id="KW-0067">ATP-binding</keyword>
<keyword id="KW-1003">Cell membrane</keyword>
<keyword id="KW-0963">Cytoplasm</keyword>
<keyword id="KW-0472">Membrane</keyword>
<keyword id="KW-0479">Metal-binding</keyword>
<keyword id="KW-0547">Nucleotide-binding</keyword>
<keyword id="KW-0653">Protein transport</keyword>
<keyword id="KW-1278">Translocase</keyword>
<keyword id="KW-0811">Translocation</keyword>
<keyword id="KW-0813">Transport</keyword>
<keyword id="KW-0862">Zinc</keyword>
<gene>
    <name evidence="1" type="primary">secA1</name>
    <name type="ordered locus">BCE33L4883</name>
</gene>
<accession>Q631G4</accession>
<comment type="function">
    <text evidence="1">Part of the Sec protein translocase complex. Interacts with the SecYEG preprotein conducting channel. Has a central role in coupling the hydrolysis of ATP to the transfer of proteins into and across the cell membrane, serving as an ATP-driven molecular motor driving the stepwise translocation of polypeptide chains across the membrane.</text>
</comment>
<comment type="catalytic activity">
    <reaction evidence="1">
        <text>ATP + H2O + cellular proteinSide 1 = ADP + phosphate + cellular proteinSide 2.</text>
        <dbReference type="EC" id="7.4.2.8"/>
    </reaction>
</comment>
<comment type="cofactor">
    <cofactor evidence="1">
        <name>Zn(2+)</name>
        <dbReference type="ChEBI" id="CHEBI:29105"/>
    </cofactor>
    <text evidence="1">May bind 1 zinc ion per subunit.</text>
</comment>
<comment type="subunit">
    <text evidence="1">Monomer and homodimer. Part of the essential Sec protein translocation apparatus which comprises SecA, SecYEG and auxiliary proteins SecDF. Other proteins may also be involved.</text>
</comment>
<comment type="subcellular location">
    <subcellularLocation>
        <location evidence="1">Cell membrane</location>
        <topology evidence="1">Peripheral membrane protein</topology>
        <orientation evidence="1">Cytoplasmic side</orientation>
    </subcellularLocation>
    <subcellularLocation>
        <location evidence="1">Cytoplasm</location>
    </subcellularLocation>
    <text evidence="1">Distribution is 50-50.</text>
</comment>
<comment type="similarity">
    <text evidence="1">Belongs to the SecA family.</text>
</comment>
<name>SECA1_BACCZ</name>
<proteinExistence type="inferred from homology"/>
<feature type="chain" id="PRO_0000318314" description="Protein translocase subunit SecA 1">
    <location>
        <begin position="1"/>
        <end position="835"/>
    </location>
</feature>
<feature type="region of interest" description="Disordered" evidence="2">
    <location>
        <begin position="788"/>
        <end position="807"/>
    </location>
</feature>
<feature type="binding site" evidence="1">
    <location>
        <position position="85"/>
    </location>
    <ligand>
        <name>ATP</name>
        <dbReference type="ChEBI" id="CHEBI:30616"/>
    </ligand>
</feature>
<feature type="binding site" evidence="1">
    <location>
        <begin position="103"/>
        <end position="107"/>
    </location>
    <ligand>
        <name>ATP</name>
        <dbReference type="ChEBI" id="CHEBI:30616"/>
    </ligand>
</feature>
<feature type="binding site" evidence="1">
    <location>
        <position position="492"/>
    </location>
    <ligand>
        <name>ATP</name>
        <dbReference type="ChEBI" id="CHEBI:30616"/>
    </ligand>
</feature>
<feature type="binding site" evidence="1">
    <location>
        <position position="819"/>
    </location>
    <ligand>
        <name>Zn(2+)</name>
        <dbReference type="ChEBI" id="CHEBI:29105"/>
    </ligand>
</feature>
<feature type="binding site" evidence="1">
    <location>
        <position position="821"/>
    </location>
    <ligand>
        <name>Zn(2+)</name>
        <dbReference type="ChEBI" id="CHEBI:29105"/>
    </ligand>
</feature>
<feature type="binding site" evidence="1">
    <location>
        <position position="830"/>
    </location>
    <ligand>
        <name>Zn(2+)</name>
        <dbReference type="ChEBI" id="CHEBI:29105"/>
    </ligand>
</feature>
<feature type="binding site" evidence="1">
    <location>
        <position position="831"/>
    </location>
    <ligand>
        <name>Zn(2+)</name>
        <dbReference type="ChEBI" id="CHEBI:29105"/>
    </ligand>
</feature>
<sequence>MIGILKKVFDVNQRQIKRMQKTVEQIDALESSIKPLTDEQLKGKTLEFKERLTKGETVDDLLPEAFAVVREAATRVLGMRPYGVQLMGGIALHEGNISEMKTGEGKTLTSTLPVYLNALTGKGVHVVTVNEYLAQRDASEMGQLHEFLGLTVGINLNSMSREEKQEAYAADITYSTNNELGFDYLRDNMVLYKEQCVQRPLHFAIIDEVDSILVDEARTPLIISGQAQKSTELYMFANAFVRTLENEKDYSFDVKTKNVMLTEDGITKAEKAFHIENLFDLKHVALLHHINQALRAHVVMHRDTDYVVQEGEIVIVDQFTGRLMKGRRYSEGLHQAIEAKEGVEIQNESMTLATITFQNYFRMYEKLSGMTGTAKTEEEEFRNIYNMNVIVIPTNKPIIRDDRADLIFKSMEGKFNAVVEDIVNRHKQGQPVLVGTVAIETSELISKMLTRKGVRHNILNAKNHAREADIIAEAGMKGAVTIATNMAGRGTDIKLGDDIKNIGLAVIGTERHESRRIDNQLRGRAGRQGDPGVTQFYLSMEDELMRRFGSDNMKAMMDRLGMDDSQPIESKMVSRAVESAQKRVEGNNYDARKQLLQYDDVLRQQREVIYKQRQEVMESENLRGIIEGMMKSTVERAVALHTQEEIEEDWNIKGLVDYLNTNLLQEGDVKEEELRRLAPEEMSEPIIAKLIERYNDKEKLMPEEQMREFEKVVVFRVVDTKWTEHIDAMDHLREGIHLRAYGQIDPLREYQMEGFAMFESMIASIEEEISRYIMKAEIEQNLERQEVVQGEAVHPSSDGEEAKKKPVVKGDQVGRNDLCKCGSGKKYKNCCGIGK</sequence>